<name>NUOD_FRAAA</name>
<accession>Q0RRW5</accession>
<dbReference type="EC" id="7.1.1.-" evidence="1"/>
<dbReference type="EMBL" id="CT573213">
    <property type="protein sequence ID" value="CAJ59700.1"/>
    <property type="molecule type" value="Genomic_DNA"/>
</dbReference>
<dbReference type="RefSeq" id="WP_011602262.1">
    <property type="nucleotide sequence ID" value="NC_008278.1"/>
</dbReference>
<dbReference type="SMR" id="Q0RRW5"/>
<dbReference type="STRING" id="326424.FRAAL1035"/>
<dbReference type="KEGG" id="fal:FRAAL1035"/>
<dbReference type="eggNOG" id="COG0649">
    <property type="taxonomic scope" value="Bacteria"/>
</dbReference>
<dbReference type="HOGENOM" id="CLU_015134_1_2_11"/>
<dbReference type="OrthoDB" id="9801496at2"/>
<dbReference type="Proteomes" id="UP000000657">
    <property type="component" value="Chromosome"/>
</dbReference>
<dbReference type="GO" id="GO:0005886">
    <property type="term" value="C:plasma membrane"/>
    <property type="evidence" value="ECO:0007669"/>
    <property type="project" value="UniProtKB-SubCell"/>
</dbReference>
<dbReference type="GO" id="GO:0051287">
    <property type="term" value="F:NAD binding"/>
    <property type="evidence" value="ECO:0007669"/>
    <property type="project" value="InterPro"/>
</dbReference>
<dbReference type="GO" id="GO:0050136">
    <property type="term" value="F:NADH:ubiquinone reductase (non-electrogenic) activity"/>
    <property type="evidence" value="ECO:0007669"/>
    <property type="project" value="UniProtKB-UniRule"/>
</dbReference>
<dbReference type="GO" id="GO:0048038">
    <property type="term" value="F:quinone binding"/>
    <property type="evidence" value="ECO:0007669"/>
    <property type="project" value="UniProtKB-KW"/>
</dbReference>
<dbReference type="Gene3D" id="1.10.645.10">
    <property type="entry name" value="Cytochrome-c3 Hydrogenase, chain B"/>
    <property type="match status" value="1"/>
</dbReference>
<dbReference type="HAMAP" id="MF_01358">
    <property type="entry name" value="NDH1_NuoD"/>
    <property type="match status" value="1"/>
</dbReference>
<dbReference type="InterPro" id="IPR001135">
    <property type="entry name" value="NADH_Q_OxRdtase_suD"/>
</dbReference>
<dbReference type="InterPro" id="IPR022885">
    <property type="entry name" value="NDH1_su_D/H"/>
</dbReference>
<dbReference type="InterPro" id="IPR029014">
    <property type="entry name" value="NiFe-Hase_large"/>
</dbReference>
<dbReference type="NCBIfam" id="TIGR01962">
    <property type="entry name" value="NuoD"/>
    <property type="match status" value="1"/>
</dbReference>
<dbReference type="NCBIfam" id="NF004739">
    <property type="entry name" value="PRK06075.1"/>
    <property type="match status" value="1"/>
</dbReference>
<dbReference type="PANTHER" id="PTHR11993:SF10">
    <property type="entry name" value="NADH DEHYDROGENASE [UBIQUINONE] IRON-SULFUR PROTEIN 2, MITOCHONDRIAL"/>
    <property type="match status" value="1"/>
</dbReference>
<dbReference type="PANTHER" id="PTHR11993">
    <property type="entry name" value="NADH-UBIQUINONE OXIDOREDUCTASE 49 KDA SUBUNIT"/>
    <property type="match status" value="1"/>
</dbReference>
<dbReference type="Pfam" id="PF00346">
    <property type="entry name" value="Complex1_49kDa"/>
    <property type="match status" value="1"/>
</dbReference>
<dbReference type="SUPFAM" id="SSF56762">
    <property type="entry name" value="HydB/Nqo4-like"/>
    <property type="match status" value="1"/>
</dbReference>
<comment type="function">
    <text evidence="1">NDH-1 shuttles electrons from NADH, via FMN and iron-sulfur (Fe-S) centers, to quinones in the respiratory chain. The immediate electron acceptor for the enzyme in this species is believed to be a menaquinone. Couples the redox reaction to proton translocation (for every two electrons transferred, four hydrogen ions are translocated across the cytoplasmic membrane), and thus conserves the redox energy in a proton gradient.</text>
</comment>
<comment type="catalytic activity">
    <reaction evidence="1">
        <text>a quinone + NADH + 5 H(+)(in) = a quinol + NAD(+) + 4 H(+)(out)</text>
        <dbReference type="Rhea" id="RHEA:57888"/>
        <dbReference type="ChEBI" id="CHEBI:15378"/>
        <dbReference type="ChEBI" id="CHEBI:24646"/>
        <dbReference type="ChEBI" id="CHEBI:57540"/>
        <dbReference type="ChEBI" id="CHEBI:57945"/>
        <dbReference type="ChEBI" id="CHEBI:132124"/>
    </reaction>
</comment>
<comment type="subunit">
    <text evidence="1">NDH-1 is composed of 14 different subunits. Subunits NuoB, C, D, E, F, and G constitute the peripheral sector of the complex.</text>
</comment>
<comment type="subcellular location">
    <subcellularLocation>
        <location evidence="1">Cell membrane</location>
        <topology evidence="1">Peripheral membrane protein</topology>
        <orientation evidence="1">Cytoplasmic side</orientation>
    </subcellularLocation>
</comment>
<comment type="similarity">
    <text evidence="1">Belongs to the complex I 49 kDa subunit family.</text>
</comment>
<feature type="chain" id="PRO_0000357816" description="NADH-quinone oxidoreductase subunit D">
    <location>
        <begin position="1"/>
        <end position="470"/>
    </location>
</feature>
<feature type="region of interest" description="Disordered" evidence="2">
    <location>
        <begin position="1"/>
        <end position="37"/>
    </location>
</feature>
<feature type="compositionally biased region" description="Low complexity" evidence="2">
    <location>
        <begin position="1"/>
        <end position="18"/>
    </location>
</feature>
<sequence>MTPSTSTPHTSTAPHTSTGQSTDGAAQPGDGSSAYEAGFTESASGRVYTVTGGDWEEILGAGEQDAERIVVNMGPQHPSTHGVLRLVLEIDGETVTETRLVIGYLHTGIEKSCEYRTWTQAVTFLTRADYLSPLYNEAAYCLSVEKLLGITDDIPERATVIRVLVMELQRIASHLVWLATGGMELGATTAMIFGFREREKVLDLLELITGLRMNHAFIRPGGLAQDLPDGTERAIREFLADMPKRIREYHRLLTGQPIWKARMVDVNVLDAAGCIALGVTGPVLRAAGLPWDLRKTMPYCGYETYEFDVPTALEADSFARYLVRLEEMGESLKIIEQCLDRLRPGPVMVADKKIAWPAQLSIGADGMGNSLAHIRNIMGTSMEALIHHFKLVTEGFRVPPGQVYTQIESPRGELGYHVVSDGGTRPFRVHVRDPSFVNLQAVPALTEGGQVADVIVGVASVDPVLGGVDR</sequence>
<reference key="1">
    <citation type="journal article" date="2007" name="Genome Res.">
        <title>Genome characteristics of facultatively symbiotic Frankia sp. strains reflect host range and host plant biogeography.</title>
        <authorList>
            <person name="Normand P."/>
            <person name="Lapierre P."/>
            <person name="Tisa L.S."/>
            <person name="Gogarten J.P."/>
            <person name="Alloisio N."/>
            <person name="Bagnarol E."/>
            <person name="Bassi C.A."/>
            <person name="Berry A.M."/>
            <person name="Bickhart D.M."/>
            <person name="Choisne N."/>
            <person name="Couloux A."/>
            <person name="Cournoyer B."/>
            <person name="Cruveiller S."/>
            <person name="Daubin V."/>
            <person name="Demange N."/>
            <person name="Francino M.P."/>
            <person name="Goltsman E."/>
            <person name="Huang Y."/>
            <person name="Kopp O.R."/>
            <person name="Labarre L."/>
            <person name="Lapidus A."/>
            <person name="Lavire C."/>
            <person name="Marechal J."/>
            <person name="Martinez M."/>
            <person name="Mastronunzio J.E."/>
            <person name="Mullin B.C."/>
            <person name="Niemann J."/>
            <person name="Pujic P."/>
            <person name="Rawnsley T."/>
            <person name="Rouy Z."/>
            <person name="Schenowitz C."/>
            <person name="Sellstedt A."/>
            <person name="Tavares F."/>
            <person name="Tomkins J.P."/>
            <person name="Vallenet D."/>
            <person name="Valverde C."/>
            <person name="Wall L.G."/>
            <person name="Wang Y."/>
            <person name="Medigue C."/>
            <person name="Benson D.R."/>
        </authorList>
    </citation>
    <scope>NUCLEOTIDE SEQUENCE [LARGE SCALE GENOMIC DNA]</scope>
    <source>
        <strain>DSM 45986 / CECT 9034 / ACN14a</strain>
    </source>
</reference>
<keyword id="KW-1003">Cell membrane</keyword>
<keyword id="KW-0472">Membrane</keyword>
<keyword id="KW-0520">NAD</keyword>
<keyword id="KW-0874">Quinone</keyword>
<keyword id="KW-1185">Reference proteome</keyword>
<keyword id="KW-1278">Translocase</keyword>
<keyword id="KW-0813">Transport</keyword>
<proteinExistence type="inferred from homology"/>
<protein>
    <recommendedName>
        <fullName evidence="1">NADH-quinone oxidoreductase subunit D</fullName>
        <ecNumber evidence="1">7.1.1.-</ecNumber>
    </recommendedName>
    <alternativeName>
        <fullName evidence="1">NADH dehydrogenase I subunit D</fullName>
    </alternativeName>
    <alternativeName>
        <fullName evidence="1">NDH-1 subunit D</fullName>
    </alternativeName>
</protein>
<gene>
    <name evidence="1" type="primary">nuoD</name>
    <name type="ordered locus">FRAAL1035</name>
</gene>
<evidence type="ECO:0000255" key="1">
    <source>
        <dbReference type="HAMAP-Rule" id="MF_01358"/>
    </source>
</evidence>
<evidence type="ECO:0000256" key="2">
    <source>
        <dbReference type="SAM" id="MobiDB-lite"/>
    </source>
</evidence>
<organism>
    <name type="scientific">Frankia alni (strain DSM 45986 / CECT 9034 / ACN14a)</name>
    <dbReference type="NCBI Taxonomy" id="326424"/>
    <lineage>
        <taxon>Bacteria</taxon>
        <taxon>Bacillati</taxon>
        <taxon>Actinomycetota</taxon>
        <taxon>Actinomycetes</taxon>
        <taxon>Frankiales</taxon>
        <taxon>Frankiaceae</taxon>
        <taxon>Frankia</taxon>
    </lineage>
</organism>